<organismHost>
    <name type="scientific">Homo sapiens</name>
    <name type="common">Human</name>
    <dbReference type="NCBI Taxonomy" id="9606"/>
</organismHost>
<organismHost>
    <name type="scientific">Mammalia</name>
    <dbReference type="NCBI Taxonomy" id="40674"/>
</organismHost>
<proteinExistence type="uncertain"/>
<accession>P15201</accession>
<reference key="1">
    <citation type="journal article" date="1988" name="Biochimie">
        <title>Sequence of the 3386 3' nucleotides of the genome of the AVO1 strain rabies virus: structural similarities in the protein regions involved in transcription.</title>
        <authorList>
            <person name="Poch O."/>
            <person name="Tordo N."/>
            <person name="Keith G."/>
        </authorList>
    </citation>
    <scope>NUCLEOTIDE SEQUENCE [GENOMIC RNA]</scope>
</reference>
<protein>
    <recommendedName>
        <fullName>Putative uncharacterized protein C</fullName>
    </recommendedName>
</protein>
<sequence length="69" mass="8255">MSRSTFLTLQEGLRRINQPRLLAESSRRRQRLLSLREKANLRKLGWWLKLPLVLQPLNGQPPMKKMIYQ</sequence>
<name>C_RABVA</name>
<gene>
    <name type="primary">C</name>
</gene>
<feature type="chain" id="PRO_0000222858" description="Putative uncharacterized protein C">
    <location>
        <begin position="1"/>
        <end position="69"/>
    </location>
</feature>
<comment type="caution">
    <text evidence="1">Product of a dubious gene prediction.</text>
</comment>
<dbReference type="EMBL" id="X13357">
    <property type="protein sequence ID" value="CAA31735.1"/>
    <property type="molecule type" value="Genomic_RNA"/>
</dbReference>
<dbReference type="PIR" id="S07815">
    <property type="entry name" value="WMVNAV"/>
</dbReference>
<dbReference type="SMR" id="P15201"/>
<evidence type="ECO:0000305" key="1"/>
<organism>
    <name type="scientific">Rabies virus (strain PM1503/AVO1)</name>
    <name type="common">RABV</name>
    <dbReference type="NCBI Taxonomy" id="11293"/>
    <lineage>
        <taxon>Viruses</taxon>
        <taxon>Riboviria</taxon>
        <taxon>Orthornavirae</taxon>
        <taxon>Negarnaviricota</taxon>
        <taxon>Haploviricotina</taxon>
        <taxon>Monjiviricetes</taxon>
        <taxon>Mononegavirales</taxon>
        <taxon>Rhabdoviridae</taxon>
        <taxon>Alpharhabdovirinae</taxon>
        <taxon>Lyssavirus</taxon>
        <taxon>Lyssavirus rabies</taxon>
    </lineage>
</organism>